<gene>
    <name type="ordered locus">MG120</name>
</gene>
<sequence>MTMWQFKSYFKHHLVFWKDRFLHSSEKQMQRRSILSSVVLIILSFLISFLLIISIPGGRGASFFALFTKLFLDNTNTENFLRQIAIYILAGLAFSFCMSVGIFNIGISGQMMAGAIFGFLMILKVFPSSFRPGFGGQIITVLLMVIGSVSVAVVVATLKIFFKVNEVVSAIMLNWIVVLISAYLVETYIKDNSGGTAQFFSLPLPDEFALYNFSPLTKKFGWLASLIIAFISVIIVAVVLKYTVFGHKLKSIGSSVFGSQAMGFNVRKYQFLSFIISGILSGLLATVVYTASTEKVLTFNNVGDSAISAVPATGFDGIAIGLIALNNPFRIVIVSVLIAFVNIGARPANLNPNTASLVLGIMMYFAALYNLMVYFKPWRYLVKLNIGKINLTTYETYENKLAANLEWLSFQRFLSKQKKKNDKTKFNWFDTSLFEQYAKNKQEIVQEYHHNCATNLIAWWLNAIQSGNIKPSTTFKLEFVNFKHQQKFVLNWFKNESESLRDFQSQFERINKLVEREFVK</sequence>
<comment type="subcellular location">
    <subcellularLocation>
        <location evidence="2">Cell membrane</location>
        <topology evidence="2">Multi-pass membrane protein</topology>
    </subcellularLocation>
</comment>
<feature type="chain" id="PRO_0000210423" description="Uncharacterized protein MG120">
    <location>
        <begin position="1"/>
        <end position="520"/>
    </location>
</feature>
<feature type="transmembrane region" description="Helical" evidence="1">
    <location>
        <begin position="38"/>
        <end position="58"/>
    </location>
</feature>
<feature type="transmembrane region" description="Helical" evidence="1">
    <location>
        <begin position="84"/>
        <end position="104"/>
    </location>
</feature>
<feature type="transmembrane region" description="Helical" evidence="1">
    <location>
        <begin position="105"/>
        <end position="125"/>
    </location>
</feature>
<feature type="transmembrane region" description="Helical" evidence="1">
    <location>
        <begin position="138"/>
        <end position="158"/>
    </location>
</feature>
<feature type="transmembrane region" description="Helical" evidence="1">
    <location>
        <begin position="167"/>
        <end position="187"/>
    </location>
</feature>
<feature type="transmembrane region" description="Helical" evidence="1">
    <location>
        <begin position="220"/>
        <end position="240"/>
    </location>
</feature>
<feature type="transmembrane region" description="Helical" evidence="1">
    <location>
        <begin position="271"/>
        <end position="291"/>
    </location>
</feature>
<feature type="transmembrane region" description="Helical" evidence="1">
    <location>
        <begin position="318"/>
        <end position="338"/>
    </location>
</feature>
<feature type="transmembrane region" description="Helical" evidence="1">
    <location>
        <begin position="355"/>
        <end position="375"/>
    </location>
</feature>
<feature type="sequence conflict" description="In Ref. 2; AAD12427." evidence="2" ref="2">
    <original>HHLV</original>
    <variation>TPPG</variation>
    <location>
        <begin position="12"/>
        <end position="15"/>
    </location>
</feature>
<feature type="sequence conflict" description="In Ref. 2; AAD12427." evidence="2" ref="2">
    <original>NFLRQIAI</original>
    <variation>KFLKTDCY</variation>
    <location>
        <begin position="79"/>
        <end position="86"/>
    </location>
</feature>
<feature type="sequence conflict" description="In Ref. 2." evidence="2" ref="2">
    <original>QEYHHNCA</original>
    <variation>EYHQQIVQ</variation>
    <location>
        <begin position="446"/>
        <end position="453"/>
    </location>
</feature>
<feature type="sequence conflict" description="In Ref. 2; AAD12422." evidence="2" ref="2">
    <original>S</original>
    <variation>I</variation>
    <location>
        <position position="499"/>
    </location>
</feature>
<evidence type="ECO:0000255" key="1"/>
<evidence type="ECO:0000305" key="2"/>
<proteinExistence type="predicted"/>
<accession>P47366</accession>
<accession>Q49272</accession>
<accession>Q49275</accession>
<name>Y120_MYCGE</name>
<keyword id="KW-1003">Cell membrane</keyword>
<keyword id="KW-0472">Membrane</keyword>
<keyword id="KW-1185">Reference proteome</keyword>
<keyword id="KW-0812">Transmembrane</keyword>
<keyword id="KW-1133">Transmembrane helix</keyword>
<reference key="1">
    <citation type="journal article" date="1995" name="Science">
        <title>The minimal gene complement of Mycoplasma genitalium.</title>
        <authorList>
            <person name="Fraser C.M."/>
            <person name="Gocayne J.D."/>
            <person name="White O."/>
            <person name="Adams M.D."/>
            <person name="Clayton R.A."/>
            <person name="Fleischmann R.D."/>
            <person name="Bult C.J."/>
            <person name="Kerlavage A.R."/>
            <person name="Sutton G.G."/>
            <person name="Kelley J.M."/>
            <person name="Fritchman J.L."/>
            <person name="Weidman J.F."/>
            <person name="Small K.V."/>
            <person name="Sandusky M."/>
            <person name="Fuhrmann J.L."/>
            <person name="Nguyen D.T."/>
            <person name="Utterback T.R."/>
            <person name="Saudek D.M."/>
            <person name="Phillips C.A."/>
            <person name="Merrick J.M."/>
            <person name="Tomb J.-F."/>
            <person name="Dougherty B.A."/>
            <person name="Bott K.F."/>
            <person name="Hu P.-C."/>
            <person name="Lucier T.S."/>
            <person name="Peterson S.N."/>
            <person name="Smith H.O."/>
            <person name="Hutchison C.A. III"/>
            <person name="Venter J.C."/>
        </authorList>
    </citation>
    <scope>NUCLEOTIDE SEQUENCE [LARGE SCALE GENOMIC DNA]</scope>
    <source>
        <strain>ATCC 33530 / DSM 19775 / NCTC 10195 / G37</strain>
    </source>
</reference>
<reference key="2">
    <citation type="journal article" date="1993" name="J. Bacteriol.">
        <title>A survey of the Mycoplasma genitalium genome by using random sequencing.</title>
        <authorList>
            <person name="Peterson S.N."/>
            <person name="Hu P.-C."/>
            <person name="Bott K.F."/>
            <person name="Hutchison C.A. III"/>
        </authorList>
    </citation>
    <scope>NUCLEOTIDE SEQUENCE [GENOMIC DNA] OF 12-86 AND 446-520</scope>
    <source>
        <strain>ATCC 33530 / DSM 19775 / NCTC 10195 / G37</strain>
    </source>
</reference>
<dbReference type="EMBL" id="L43967">
    <property type="protein sequence ID" value="AAC71338.1"/>
    <property type="molecule type" value="Genomic_DNA"/>
</dbReference>
<dbReference type="EMBL" id="U02147">
    <property type="protein sequence ID" value="AAD12427.1"/>
    <property type="molecule type" value="Genomic_DNA"/>
</dbReference>
<dbReference type="EMBL" id="U02143">
    <property type="protein sequence ID" value="AAD12422.1"/>
    <property type="molecule type" value="Genomic_DNA"/>
</dbReference>
<dbReference type="PIR" id="C64213">
    <property type="entry name" value="C64213"/>
</dbReference>
<dbReference type="RefSeq" id="WP_010869341.1">
    <property type="nucleotide sequence ID" value="NC_000908.2"/>
</dbReference>
<dbReference type="FunCoup" id="P47366">
    <property type="interactions" value="55"/>
</dbReference>
<dbReference type="STRING" id="243273.MG_120"/>
<dbReference type="GeneID" id="88282244"/>
<dbReference type="KEGG" id="mge:MG_120"/>
<dbReference type="eggNOG" id="COG4603">
    <property type="taxonomic scope" value="Bacteria"/>
</dbReference>
<dbReference type="HOGENOM" id="CLU_023404_0_1_14"/>
<dbReference type="InParanoid" id="P47366"/>
<dbReference type="Proteomes" id="UP000000807">
    <property type="component" value="Chromosome"/>
</dbReference>
<dbReference type="GO" id="GO:0005886">
    <property type="term" value="C:plasma membrane"/>
    <property type="evidence" value="ECO:0007669"/>
    <property type="project" value="UniProtKB-SubCell"/>
</dbReference>
<dbReference type="GO" id="GO:0022857">
    <property type="term" value="F:transmembrane transporter activity"/>
    <property type="evidence" value="ECO:0007669"/>
    <property type="project" value="InterPro"/>
</dbReference>
<dbReference type="CDD" id="cd06580">
    <property type="entry name" value="TM_PBP1_transp_TpRbsC_like"/>
    <property type="match status" value="1"/>
</dbReference>
<dbReference type="InterPro" id="IPR001851">
    <property type="entry name" value="ABC_transp_permease"/>
</dbReference>
<dbReference type="PANTHER" id="PTHR43370:SF1">
    <property type="entry name" value="GUANOSINE ABC TRANSPORTER PERMEASE PROTEIN NUPQ"/>
    <property type="match status" value="1"/>
</dbReference>
<dbReference type="PANTHER" id="PTHR43370">
    <property type="entry name" value="SUGAR ABC TRANSPORTER INTEGRAL MEMBRANE PROTEIN-RELATED"/>
    <property type="match status" value="1"/>
</dbReference>
<dbReference type="Pfam" id="PF02653">
    <property type="entry name" value="BPD_transp_2"/>
    <property type="match status" value="1"/>
</dbReference>
<protein>
    <recommendedName>
        <fullName>Uncharacterized protein MG120</fullName>
    </recommendedName>
</protein>
<organism>
    <name type="scientific">Mycoplasma genitalium (strain ATCC 33530 / DSM 19775 / NCTC 10195 / G37)</name>
    <name type="common">Mycoplasmoides genitalium</name>
    <dbReference type="NCBI Taxonomy" id="243273"/>
    <lineage>
        <taxon>Bacteria</taxon>
        <taxon>Bacillati</taxon>
        <taxon>Mycoplasmatota</taxon>
        <taxon>Mycoplasmoidales</taxon>
        <taxon>Mycoplasmoidaceae</taxon>
        <taxon>Mycoplasmoides</taxon>
    </lineage>
</organism>